<protein>
    <recommendedName>
        <fullName>Probable nicotianamine synthase 4</fullName>
        <ecNumber>2.5.1.43</ecNumber>
    </recommendedName>
    <alternativeName>
        <fullName>HvNAS4</fullName>
    </alternativeName>
    <alternativeName>
        <fullName>S-adenosyl-L-methionine:S-adenosyl-L-methionine:S-adenosyl-methionine 3-amino-3-carboxypropyltransferase 4</fullName>
    </alternativeName>
</protein>
<sequence length="329" mass="35398">MDGQSEEVDALVQKITGLHAAIAKLPSLSPSPDVDALFTDLVTACVPPSPVDVTKLAPEAQAMREGLIRLCSEAEGKLEAHYSDMLAAFDNPLDHLGVFPYYSNYINLSKLEYELLARYVPGRHRPARVAFIGSGPLPFSSYVLAARHLPDTVFDNYDLCGAANDRATRLFRADKDVGARMSFHTADVADLTDELATYDVVFLAALVGMAAEDKAKVIAHLGAHMADGAALVARHGARGFLYPIVDPQDIGRGGFEVLAVCHPDDDVVNSVIIAQKSNDVHEYGLGSGRGGRYARGTVVPVVSPPCRFGEMVADVTQKREEFANAEVAF</sequence>
<reference key="1">
    <citation type="journal article" date="1999" name="Plant Physiol.">
        <title>Cloning of nicotianamine synthase genes, novel genes involved in the biosynthesis of phytosiderophores.</title>
        <authorList>
            <person name="Higuchi K."/>
            <person name="Suzuki K."/>
            <person name="Nakanishi H."/>
            <person name="Yamaguchi H."/>
            <person name="Nishizawa N.-K."/>
            <person name="Mori S."/>
        </authorList>
    </citation>
    <scope>NUCLEOTIDE SEQUENCE [MRNA]</scope>
    <source>
        <strain>cv. Ehimehadaka No.1</strain>
        <tissue>Root</tissue>
    </source>
</reference>
<evidence type="ECO:0000250" key="1"/>
<evidence type="ECO:0000305" key="2"/>
<keyword id="KW-0949">S-adenosyl-L-methionine</keyword>
<keyword id="KW-0808">Transferase</keyword>
<comment type="function">
    <text evidence="1">Synthesizes nicotianamine, a polyamine that is the first intermediate in the synthesis of the phytosiderophores of the mugineic acid type found in gramineae which serves as a sensor for the physiological iron status within the plant, and/or might be involved in the transport of iron.</text>
</comment>
<comment type="catalytic activity">
    <reaction>
        <text>3 S-adenosyl-L-methionine = nicotianamine + 3 S-methyl-5'-thioadenosine + 3 H(+)</text>
        <dbReference type="Rhea" id="RHEA:16481"/>
        <dbReference type="ChEBI" id="CHEBI:15378"/>
        <dbReference type="ChEBI" id="CHEBI:17509"/>
        <dbReference type="ChEBI" id="CHEBI:58249"/>
        <dbReference type="ChEBI" id="CHEBI:59789"/>
        <dbReference type="EC" id="2.5.1.43"/>
    </reaction>
</comment>
<comment type="similarity">
    <text evidence="2">Belongs to the nicotianamine synthase (NAS)-like family.</text>
</comment>
<name>NAS4_HORVU</name>
<dbReference type="EC" id="2.5.1.43"/>
<dbReference type="EMBL" id="AB011266">
    <property type="protein sequence ID" value="BAA74583.1"/>
    <property type="molecule type" value="mRNA"/>
</dbReference>
<dbReference type="SMR" id="Q9ZQV6"/>
<dbReference type="BRENDA" id="2.5.1.43">
    <property type="organism ID" value="2687"/>
</dbReference>
<dbReference type="ExpressionAtlas" id="Q9ZQV6">
    <property type="expression patterns" value="differential"/>
</dbReference>
<dbReference type="GO" id="GO:0030410">
    <property type="term" value="F:nicotianamine synthase activity"/>
    <property type="evidence" value="ECO:0007669"/>
    <property type="project" value="UniProtKB-EC"/>
</dbReference>
<dbReference type="GO" id="GO:0030418">
    <property type="term" value="P:nicotianamine biosynthetic process"/>
    <property type="evidence" value="ECO:0007669"/>
    <property type="project" value="InterPro"/>
</dbReference>
<dbReference type="Gene3D" id="3.40.50.150">
    <property type="entry name" value="Vaccinia Virus protein VP39"/>
    <property type="match status" value="1"/>
</dbReference>
<dbReference type="InterPro" id="IPR004298">
    <property type="entry name" value="Nicotian_synth"/>
</dbReference>
<dbReference type="InterPro" id="IPR029063">
    <property type="entry name" value="SAM-dependent_MTases_sf"/>
</dbReference>
<dbReference type="PANTHER" id="PTHR32266:SF20">
    <property type="entry name" value="NICOTIANAMINE SYNTHASE"/>
    <property type="match status" value="1"/>
</dbReference>
<dbReference type="PANTHER" id="PTHR32266">
    <property type="entry name" value="NICOTIANAMINE SYNTHASE 3"/>
    <property type="match status" value="1"/>
</dbReference>
<dbReference type="Pfam" id="PF03059">
    <property type="entry name" value="NAS"/>
    <property type="match status" value="1"/>
</dbReference>
<dbReference type="SUPFAM" id="SSF53335">
    <property type="entry name" value="S-adenosyl-L-methionine-dependent methyltransferases"/>
    <property type="match status" value="1"/>
</dbReference>
<dbReference type="PROSITE" id="PS51142">
    <property type="entry name" value="NAS"/>
    <property type="match status" value="1"/>
</dbReference>
<accession>Q9ZQV6</accession>
<feature type="chain" id="PRO_0000212707" description="Probable nicotianamine synthase 4">
    <location>
        <begin position="1"/>
        <end position="329"/>
    </location>
</feature>
<organism>
    <name type="scientific">Hordeum vulgare</name>
    <name type="common">Barley</name>
    <dbReference type="NCBI Taxonomy" id="4513"/>
    <lineage>
        <taxon>Eukaryota</taxon>
        <taxon>Viridiplantae</taxon>
        <taxon>Streptophyta</taxon>
        <taxon>Embryophyta</taxon>
        <taxon>Tracheophyta</taxon>
        <taxon>Spermatophyta</taxon>
        <taxon>Magnoliopsida</taxon>
        <taxon>Liliopsida</taxon>
        <taxon>Poales</taxon>
        <taxon>Poaceae</taxon>
        <taxon>BOP clade</taxon>
        <taxon>Pooideae</taxon>
        <taxon>Triticodae</taxon>
        <taxon>Triticeae</taxon>
        <taxon>Hordeinae</taxon>
        <taxon>Hordeum</taxon>
    </lineage>
</organism>
<gene>
    <name type="primary">NAS4</name>
</gene>
<proteinExistence type="evidence at transcript level"/>